<sequence>MDVLELYRRTGALLEGHFLLRSGMHSPFFLQSAALLQHPLYAEAVGEALGKLFEDEKVDFVIAPAIGGVVLSFVVAKALGARALFAEKDGRGGMLIRKGLTVNPGDRFLAVEDVVTTGESVRKAIRAAEARGGVLVGVGAIVDRSGGRAAFGVPFRALLALEVPQYPEEACPLCREGVPLEEV</sequence>
<comment type="function">
    <text evidence="1">Catalyzes the transfer of a ribosyl phosphate group from 5-phosphoribose 1-diphosphate to orotate, leading to the formation of orotidine monophosphate (OMP).</text>
</comment>
<comment type="catalytic activity">
    <reaction evidence="1">
        <text>orotidine 5'-phosphate + diphosphate = orotate + 5-phospho-alpha-D-ribose 1-diphosphate</text>
        <dbReference type="Rhea" id="RHEA:10380"/>
        <dbReference type="ChEBI" id="CHEBI:30839"/>
        <dbReference type="ChEBI" id="CHEBI:33019"/>
        <dbReference type="ChEBI" id="CHEBI:57538"/>
        <dbReference type="ChEBI" id="CHEBI:58017"/>
        <dbReference type="EC" id="2.4.2.10"/>
    </reaction>
</comment>
<comment type="cofactor">
    <cofactor evidence="1">
        <name>Mg(2+)</name>
        <dbReference type="ChEBI" id="CHEBI:18420"/>
    </cofactor>
</comment>
<comment type="pathway">
    <text evidence="1">Pyrimidine metabolism; UMP biosynthesis via de novo pathway; UMP from orotate: step 1/2.</text>
</comment>
<comment type="subunit">
    <text evidence="1">Homodimer.</text>
</comment>
<comment type="similarity">
    <text evidence="1">Belongs to the purine/pyrimidine phosphoribosyltransferase family. PyrE subfamily.</text>
</comment>
<proteinExistence type="inferred from homology"/>
<keyword id="KW-0328">Glycosyltransferase</keyword>
<keyword id="KW-0460">Magnesium</keyword>
<keyword id="KW-0665">Pyrimidine biosynthesis</keyword>
<keyword id="KW-0808">Transferase</keyword>
<gene>
    <name evidence="1" type="primary">pyrE</name>
</gene>
<feature type="chain" id="PRO_0000110761" description="Orotate phosphoribosyltransferase">
    <location>
        <begin position="1"/>
        <end position="183"/>
    </location>
</feature>
<feature type="binding site" evidence="1">
    <location>
        <position position="21"/>
    </location>
    <ligand>
        <name>5-phospho-alpha-D-ribose 1-diphosphate</name>
        <dbReference type="ChEBI" id="CHEBI:58017"/>
    </ligand>
</feature>
<feature type="binding site" evidence="1">
    <location>
        <position position="88"/>
    </location>
    <ligand>
        <name>5-phospho-alpha-D-ribose 1-diphosphate</name>
        <dbReference type="ChEBI" id="CHEBI:58017"/>
    </ligand>
</feature>
<feature type="binding site" evidence="1">
    <location>
        <begin position="112"/>
        <end position="120"/>
    </location>
    <ligand>
        <name>5-phospho-alpha-D-ribose 1-diphosphate</name>
        <dbReference type="ChEBI" id="CHEBI:58017"/>
    </ligand>
</feature>
<feature type="binding site" evidence="1">
    <location>
        <position position="116"/>
    </location>
    <ligand>
        <name>orotate</name>
        <dbReference type="ChEBI" id="CHEBI:30839"/>
    </ligand>
</feature>
<feature type="binding site" evidence="1">
    <location>
        <position position="144"/>
    </location>
    <ligand>
        <name>orotate</name>
        <dbReference type="ChEBI" id="CHEBI:30839"/>
    </ligand>
</feature>
<evidence type="ECO:0000255" key="1">
    <source>
        <dbReference type="HAMAP-Rule" id="MF_01208"/>
    </source>
</evidence>
<protein>
    <recommendedName>
        <fullName evidence="1">Orotate phosphoribosyltransferase</fullName>
        <shortName evidence="1">OPRT</shortName>
        <shortName evidence="1">OPRTase</shortName>
        <ecNumber evidence="1">2.4.2.10</ecNumber>
    </recommendedName>
</protein>
<organism>
    <name type="scientific">Thermus thermophilus</name>
    <dbReference type="NCBI Taxonomy" id="274"/>
    <lineage>
        <taxon>Bacteria</taxon>
        <taxon>Thermotogati</taxon>
        <taxon>Deinococcota</taxon>
        <taxon>Deinococci</taxon>
        <taxon>Thermales</taxon>
        <taxon>Thermaceae</taxon>
        <taxon>Thermus</taxon>
    </lineage>
</organism>
<name>PYRE_THETH</name>
<reference key="1">
    <citation type="journal article" date="1995" name="J. Bacteriol.">
        <title>Molecular cloning of the pyrE gene from the extreme thermophile Thermus flavus.</title>
        <authorList>
            <person name="Vonstein V."/>
            <person name="Johnson S.P."/>
            <person name="Yu H."/>
            <person name="Casadaban M.J."/>
            <person name="Pagratis N.C."/>
            <person name="Weber J.M."/>
            <person name="Demirjian D.C."/>
        </authorList>
    </citation>
    <scope>NUCLEOTIDE SEQUENCE [GENOMIC DNA]</scope>
    <source>
        <strain>ATCC 33923 / DSM 674 / AT-62</strain>
    </source>
</reference>
<dbReference type="EC" id="2.4.2.10" evidence="1"/>
<dbReference type="EMBL" id="U27180">
    <property type="protein sequence ID" value="AAB17115.1"/>
    <property type="molecule type" value="Genomic_DNA"/>
</dbReference>
<dbReference type="RefSeq" id="WP_011173763.1">
    <property type="nucleotide sequence ID" value="NZ_CP144687.1"/>
</dbReference>
<dbReference type="SMR" id="P61499"/>
<dbReference type="UniPathway" id="UPA00070">
    <property type="reaction ID" value="UER00119"/>
</dbReference>
<dbReference type="GO" id="GO:0000287">
    <property type="term" value="F:magnesium ion binding"/>
    <property type="evidence" value="ECO:0007669"/>
    <property type="project" value="UniProtKB-UniRule"/>
</dbReference>
<dbReference type="GO" id="GO:0004588">
    <property type="term" value="F:orotate phosphoribosyltransferase activity"/>
    <property type="evidence" value="ECO:0007669"/>
    <property type="project" value="UniProtKB-UniRule"/>
</dbReference>
<dbReference type="GO" id="GO:0044205">
    <property type="term" value="P:'de novo' UMP biosynthetic process"/>
    <property type="evidence" value="ECO:0007669"/>
    <property type="project" value="UniProtKB-UniRule"/>
</dbReference>
<dbReference type="GO" id="GO:0019856">
    <property type="term" value="P:pyrimidine nucleobase biosynthetic process"/>
    <property type="evidence" value="ECO:0007669"/>
    <property type="project" value="InterPro"/>
</dbReference>
<dbReference type="CDD" id="cd06223">
    <property type="entry name" value="PRTases_typeI"/>
    <property type="match status" value="1"/>
</dbReference>
<dbReference type="Gene3D" id="3.40.50.2020">
    <property type="match status" value="1"/>
</dbReference>
<dbReference type="HAMAP" id="MF_01208">
    <property type="entry name" value="PyrE"/>
    <property type="match status" value="1"/>
</dbReference>
<dbReference type="InterPro" id="IPR023031">
    <property type="entry name" value="OPRT"/>
</dbReference>
<dbReference type="InterPro" id="IPR006273">
    <property type="entry name" value="Orotate_PRibTrfase_bac"/>
</dbReference>
<dbReference type="InterPro" id="IPR000836">
    <property type="entry name" value="PRibTrfase_dom"/>
</dbReference>
<dbReference type="InterPro" id="IPR029057">
    <property type="entry name" value="PRTase-like"/>
</dbReference>
<dbReference type="NCBIfam" id="TIGR01367">
    <property type="entry name" value="pyrE_Therm"/>
    <property type="match status" value="1"/>
</dbReference>
<dbReference type="PANTHER" id="PTHR19278">
    <property type="entry name" value="OROTATE PHOSPHORIBOSYLTRANSFERASE"/>
    <property type="match status" value="1"/>
</dbReference>
<dbReference type="PANTHER" id="PTHR19278:SF9">
    <property type="entry name" value="URIDINE 5'-MONOPHOSPHATE SYNTHASE"/>
    <property type="match status" value="1"/>
</dbReference>
<dbReference type="Pfam" id="PF00156">
    <property type="entry name" value="Pribosyltran"/>
    <property type="match status" value="1"/>
</dbReference>
<dbReference type="SUPFAM" id="SSF53271">
    <property type="entry name" value="PRTase-like"/>
    <property type="match status" value="1"/>
</dbReference>
<dbReference type="PROSITE" id="PS00103">
    <property type="entry name" value="PUR_PYR_PR_TRANSFER"/>
    <property type="match status" value="1"/>
</dbReference>
<accession>P61499</accession>
<accession>O08047</accession>
<accession>O08276</accession>
<accession>Q60016</accession>